<proteinExistence type="evidence at protein level"/>
<comment type="function">
    <text evidence="1">Blocks olfactory (CNGA2) and retinal (CNGA1) CNG channel currents. Does not affect neither depolarization- nor caffeine-induced contraction of smooth muscle (By similarity).</text>
</comment>
<comment type="subcellular location">
    <subcellularLocation>
        <location evidence="1">Secreted</location>
    </subcellularLocation>
</comment>
<comment type="tissue specificity">
    <text>Expressed by the venom gland.</text>
</comment>
<comment type="similarity">
    <text evidence="3">Belongs to the CRISP family.</text>
</comment>
<organism>
    <name type="scientific">Pseudonaja textilis</name>
    <name type="common">Eastern brown snake</name>
    <dbReference type="NCBI Taxonomy" id="8673"/>
    <lineage>
        <taxon>Eukaryota</taxon>
        <taxon>Metazoa</taxon>
        <taxon>Chordata</taxon>
        <taxon>Craniata</taxon>
        <taxon>Vertebrata</taxon>
        <taxon>Euteleostomi</taxon>
        <taxon>Lepidosauria</taxon>
        <taxon>Squamata</taxon>
        <taxon>Bifurcata</taxon>
        <taxon>Unidentata</taxon>
        <taxon>Episquamata</taxon>
        <taxon>Toxicofera</taxon>
        <taxon>Serpentes</taxon>
        <taxon>Colubroidea</taxon>
        <taxon>Elapidae</taxon>
        <taxon>Hydrophiinae</taxon>
        <taxon>Pseudonaja</taxon>
    </lineage>
</organism>
<protein>
    <recommendedName>
        <fullName>Cysteine-rich venom protein pseudechetoxin-like</fullName>
        <shortName>CRVP</shortName>
    </recommendedName>
</protein>
<evidence type="ECO:0000250" key="1"/>
<evidence type="ECO:0000255" key="2">
    <source>
        <dbReference type="PROSITE-ProRule" id="PRU01005"/>
    </source>
</evidence>
<evidence type="ECO:0000305" key="3"/>
<dbReference type="EMBL" id="DQ084037">
    <property type="protein sequence ID" value="AAZ38982.1"/>
    <property type="molecule type" value="mRNA"/>
</dbReference>
<dbReference type="RefSeq" id="XP_026568633.1">
    <property type="nucleotide sequence ID" value="XM_026712848.1"/>
</dbReference>
<dbReference type="SMR" id="Q3SB05"/>
<dbReference type="Ensembl" id="ENSPTXT00000009319.1">
    <property type="protein sequence ID" value="ENSPTXP00000009010.1"/>
    <property type="gene ID" value="ENSPTXG00000006481.1"/>
</dbReference>
<dbReference type="GeneID" id="113444210"/>
<dbReference type="GeneTree" id="ENSGT00940000162013"/>
<dbReference type="OMA" id="CEYENIY"/>
<dbReference type="Proteomes" id="UP000472273">
    <property type="component" value="Unplaced"/>
</dbReference>
<dbReference type="GO" id="GO:0005576">
    <property type="term" value="C:extracellular region"/>
    <property type="evidence" value="ECO:0007669"/>
    <property type="project" value="UniProtKB-SubCell"/>
</dbReference>
<dbReference type="GO" id="GO:0099106">
    <property type="term" value="F:ion channel regulator activity"/>
    <property type="evidence" value="ECO:0007669"/>
    <property type="project" value="UniProtKB-KW"/>
</dbReference>
<dbReference type="GO" id="GO:0090729">
    <property type="term" value="F:toxin activity"/>
    <property type="evidence" value="ECO:0007669"/>
    <property type="project" value="UniProtKB-KW"/>
</dbReference>
<dbReference type="CDD" id="cd05383">
    <property type="entry name" value="CAP_CRISP"/>
    <property type="match status" value="1"/>
</dbReference>
<dbReference type="FunFam" id="1.10.10.740:FF:000001">
    <property type="entry name" value="Cysteine-rich secretory protein 2"/>
    <property type="match status" value="1"/>
</dbReference>
<dbReference type="FunFam" id="3.40.33.10:FF:000005">
    <property type="entry name" value="Cysteine-rich secretory protein 2"/>
    <property type="match status" value="1"/>
</dbReference>
<dbReference type="Gene3D" id="3.40.33.10">
    <property type="entry name" value="CAP"/>
    <property type="match status" value="1"/>
</dbReference>
<dbReference type="Gene3D" id="1.10.10.740">
    <property type="entry name" value="Crisp domain"/>
    <property type="match status" value="1"/>
</dbReference>
<dbReference type="InterPro" id="IPR018244">
    <property type="entry name" value="Allrgn_V5/Tpx1_CS"/>
</dbReference>
<dbReference type="InterPro" id="IPR014044">
    <property type="entry name" value="CAP_dom"/>
</dbReference>
<dbReference type="InterPro" id="IPR035940">
    <property type="entry name" value="CAP_sf"/>
</dbReference>
<dbReference type="InterPro" id="IPR042076">
    <property type="entry name" value="Crisp-like_dom"/>
</dbReference>
<dbReference type="InterPro" id="IPR001283">
    <property type="entry name" value="CRISP-related"/>
</dbReference>
<dbReference type="InterPro" id="IPR013871">
    <property type="entry name" value="Cysteine_rich_secretory"/>
</dbReference>
<dbReference type="InterPro" id="IPR034117">
    <property type="entry name" value="SCP_CRISP"/>
</dbReference>
<dbReference type="InterPro" id="IPR003582">
    <property type="entry name" value="ShKT_dom"/>
</dbReference>
<dbReference type="PANTHER" id="PTHR10334">
    <property type="entry name" value="CYSTEINE-RICH SECRETORY PROTEIN-RELATED"/>
    <property type="match status" value="1"/>
</dbReference>
<dbReference type="Pfam" id="PF00188">
    <property type="entry name" value="CAP"/>
    <property type="match status" value="1"/>
</dbReference>
<dbReference type="Pfam" id="PF08562">
    <property type="entry name" value="Crisp"/>
    <property type="match status" value="1"/>
</dbReference>
<dbReference type="PRINTS" id="PR00837">
    <property type="entry name" value="V5TPXLIKE"/>
</dbReference>
<dbReference type="SMART" id="SM00198">
    <property type="entry name" value="SCP"/>
    <property type="match status" value="1"/>
</dbReference>
<dbReference type="SUPFAM" id="SSF57546">
    <property type="entry name" value="Crisp domain-like"/>
    <property type="match status" value="1"/>
</dbReference>
<dbReference type="SUPFAM" id="SSF55797">
    <property type="entry name" value="PR-1-like"/>
    <property type="match status" value="1"/>
</dbReference>
<dbReference type="PROSITE" id="PS01009">
    <property type="entry name" value="CRISP_1"/>
    <property type="match status" value="1"/>
</dbReference>
<dbReference type="PROSITE" id="PS01010">
    <property type="entry name" value="CRISP_2"/>
    <property type="match status" value="1"/>
</dbReference>
<dbReference type="PROSITE" id="PS51670">
    <property type="entry name" value="SHKT"/>
    <property type="match status" value="1"/>
</dbReference>
<name>CRVP_PSETE</name>
<sequence length="238" mass="26429">MIAFLVLLSLAAVLQQSSGTVDFASESSNKNDYQKEIVDKHNDLRRSVKPTARNMLQMKWNSRAAQNAKRWANRCTFAHSPPYTRTVGKLRCGENIFMSSQPFAWSGVVQAWYDEVKKFVYGIGAKPPSSVTGHYTQVVWYKSHLLGCASAKCSSTKYLYVCQYCPAGNIVGSIATPYKSGPPCGDCPSACDNGLCTNPCKHNDDLSNCKTLVKKHKCQTEWIKSKCPATCFCRTEII</sequence>
<accession>Q3SB05</accession>
<reference key="1">
    <citation type="journal article" date="2005" name="Cell. Mol. Life Sci.">
        <title>Identification and analysis of venom gland-specific genes from the coastal taipan (Oxyuranus scutellatus) and related species.</title>
        <authorList>
            <person name="St Pierre L."/>
            <person name="Woods R."/>
            <person name="Earl S.T.H."/>
            <person name="Masci P.P."/>
            <person name="Lavin M.F."/>
        </authorList>
    </citation>
    <scope>NUCLEOTIDE SEQUENCE [MRNA]</scope>
    <source>
        <tissue>Venom gland</tissue>
    </source>
</reference>
<reference key="2">
    <citation type="journal article" date="2006" name="Mol. Cell. Proteomics">
        <title>Molecular diversity in venom from the Australian Brown snake, Pseudonaja textilis.</title>
        <authorList>
            <person name="Birrell G.W."/>
            <person name="Earl S."/>
            <person name="Masci P.P."/>
            <person name="de Jersey J."/>
            <person name="Wallis T.P."/>
            <person name="Gorman J.J."/>
            <person name="Lavin M.F."/>
        </authorList>
    </citation>
    <scope>PROTEIN SEQUENCE OF 219-238 AND 227-234</scope>
    <source>
        <tissue>Venom</tissue>
    </source>
</reference>
<keyword id="KW-0903">Direct protein sequencing</keyword>
<keyword id="KW-1015">Disulfide bond</keyword>
<keyword id="KW-0872">Ion channel impairing toxin</keyword>
<keyword id="KW-0528">Neurotoxin</keyword>
<keyword id="KW-1185">Reference proteome</keyword>
<keyword id="KW-0964">Secreted</keyword>
<keyword id="KW-0732">Signal</keyword>
<keyword id="KW-0800">Toxin</keyword>
<feature type="signal peptide" evidence="1">
    <location>
        <begin position="1"/>
        <end position="19"/>
    </location>
</feature>
<feature type="propeptide" id="PRO_0000380666" evidence="1">
    <location>
        <begin position="20"/>
        <end position="28"/>
    </location>
</feature>
<feature type="chain" id="PRO_5000140334" description="Cysteine-rich venom protein pseudechetoxin-like">
    <location>
        <begin position="29"/>
        <end position="238"/>
    </location>
</feature>
<feature type="domain" description="SCP">
    <location>
        <begin position="38"/>
        <end position="164"/>
    </location>
</feature>
<feature type="domain" description="ShKT" evidence="2">
    <location>
        <begin position="200"/>
        <end position="233"/>
    </location>
</feature>
<feature type="disulfide bond" evidence="2">
    <location>
        <begin position="75"/>
        <end position="153"/>
    </location>
</feature>
<feature type="disulfide bond" evidence="2">
    <location>
        <begin position="92"/>
        <end position="165"/>
    </location>
</feature>
<feature type="disulfide bond" evidence="2">
    <location>
        <begin position="148"/>
        <end position="162"/>
    </location>
</feature>
<feature type="disulfide bond" evidence="2">
    <location>
        <begin position="184"/>
        <end position="191"/>
    </location>
</feature>
<feature type="disulfide bond" evidence="2">
    <location>
        <begin position="187"/>
        <end position="196"/>
    </location>
</feature>
<feature type="disulfide bond" evidence="2">
    <location>
        <begin position="200"/>
        <end position="233"/>
    </location>
</feature>
<feature type="disulfide bond" evidence="2">
    <location>
        <begin position="209"/>
        <end position="227"/>
    </location>
</feature>
<feature type="disulfide bond" evidence="2">
    <location>
        <begin position="218"/>
        <end position="231"/>
    </location>
</feature>